<dbReference type="EC" id="4.98.1.1" evidence="1"/>
<dbReference type="EMBL" id="AE006468">
    <property type="protein sequence ID" value="AAL19443.1"/>
    <property type="molecule type" value="Genomic_DNA"/>
</dbReference>
<dbReference type="EMBL" id="L26246">
    <property type="protein sequence ID" value="AAA65970.1"/>
    <property type="molecule type" value="Genomic_DNA"/>
</dbReference>
<dbReference type="RefSeq" id="NP_459484.1">
    <property type="nucleotide sequence ID" value="NC_003197.2"/>
</dbReference>
<dbReference type="RefSeq" id="WP_001250078.1">
    <property type="nucleotide sequence ID" value="NC_003197.2"/>
</dbReference>
<dbReference type="SMR" id="P37408"/>
<dbReference type="STRING" id="99287.STM0489"/>
<dbReference type="PaxDb" id="99287-STM0489"/>
<dbReference type="GeneID" id="1252009"/>
<dbReference type="KEGG" id="stm:STM0489"/>
<dbReference type="PATRIC" id="fig|99287.12.peg.523"/>
<dbReference type="HOGENOM" id="CLU_018884_0_0_6"/>
<dbReference type="OMA" id="DPYHCEC"/>
<dbReference type="PhylomeDB" id="P37408"/>
<dbReference type="BioCyc" id="SENT99287:STM0489-MONOMER"/>
<dbReference type="UniPathway" id="UPA00252">
    <property type="reaction ID" value="UER00325"/>
</dbReference>
<dbReference type="Proteomes" id="UP000001014">
    <property type="component" value="Chromosome"/>
</dbReference>
<dbReference type="GO" id="GO:0005737">
    <property type="term" value="C:cytoplasm"/>
    <property type="evidence" value="ECO:0007669"/>
    <property type="project" value="UniProtKB-SubCell"/>
</dbReference>
<dbReference type="GO" id="GO:0004325">
    <property type="term" value="F:ferrochelatase activity"/>
    <property type="evidence" value="ECO:0000318"/>
    <property type="project" value="GO_Central"/>
</dbReference>
<dbReference type="GO" id="GO:0046872">
    <property type="term" value="F:metal ion binding"/>
    <property type="evidence" value="ECO:0007669"/>
    <property type="project" value="UniProtKB-KW"/>
</dbReference>
<dbReference type="GO" id="GO:0006783">
    <property type="term" value="P:heme biosynthetic process"/>
    <property type="evidence" value="ECO:0000318"/>
    <property type="project" value="GO_Central"/>
</dbReference>
<dbReference type="CDD" id="cd00419">
    <property type="entry name" value="Ferrochelatase_C"/>
    <property type="match status" value="1"/>
</dbReference>
<dbReference type="CDD" id="cd03411">
    <property type="entry name" value="Ferrochelatase_N"/>
    <property type="match status" value="1"/>
</dbReference>
<dbReference type="FunFam" id="3.40.50.1400:FF:000004">
    <property type="entry name" value="Ferrochelatase"/>
    <property type="match status" value="1"/>
</dbReference>
<dbReference type="Gene3D" id="3.40.50.1400">
    <property type="match status" value="2"/>
</dbReference>
<dbReference type="HAMAP" id="MF_00323">
    <property type="entry name" value="Ferrochelatase"/>
    <property type="match status" value="1"/>
</dbReference>
<dbReference type="InterPro" id="IPR001015">
    <property type="entry name" value="Ferrochelatase"/>
</dbReference>
<dbReference type="InterPro" id="IPR019772">
    <property type="entry name" value="Ferrochelatase_AS"/>
</dbReference>
<dbReference type="InterPro" id="IPR033644">
    <property type="entry name" value="Ferrochelatase_C"/>
</dbReference>
<dbReference type="InterPro" id="IPR033659">
    <property type="entry name" value="Ferrochelatase_N"/>
</dbReference>
<dbReference type="NCBIfam" id="TIGR00109">
    <property type="entry name" value="hemH"/>
    <property type="match status" value="1"/>
</dbReference>
<dbReference type="PANTHER" id="PTHR11108">
    <property type="entry name" value="FERROCHELATASE"/>
    <property type="match status" value="1"/>
</dbReference>
<dbReference type="PANTHER" id="PTHR11108:SF1">
    <property type="entry name" value="FERROCHELATASE, MITOCHONDRIAL"/>
    <property type="match status" value="1"/>
</dbReference>
<dbReference type="Pfam" id="PF00762">
    <property type="entry name" value="Ferrochelatase"/>
    <property type="match status" value="1"/>
</dbReference>
<dbReference type="SUPFAM" id="SSF53800">
    <property type="entry name" value="Chelatase"/>
    <property type="match status" value="1"/>
</dbReference>
<dbReference type="PROSITE" id="PS00534">
    <property type="entry name" value="FERROCHELATASE"/>
    <property type="match status" value="1"/>
</dbReference>
<accession>P37408</accession>
<comment type="function">
    <text evidence="1">Catalyzes the ferrous insertion into protoporphyrin IX.</text>
</comment>
<comment type="catalytic activity">
    <reaction evidence="1">
        <text>heme b + 2 H(+) = protoporphyrin IX + Fe(2+)</text>
        <dbReference type="Rhea" id="RHEA:22584"/>
        <dbReference type="ChEBI" id="CHEBI:15378"/>
        <dbReference type="ChEBI" id="CHEBI:29033"/>
        <dbReference type="ChEBI" id="CHEBI:57306"/>
        <dbReference type="ChEBI" id="CHEBI:60344"/>
        <dbReference type="EC" id="4.98.1.1"/>
    </reaction>
</comment>
<comment type="pathway">
    <text evidence="1">Porphyrin-containing compound metabolism; protoheme biosynthesis; protoheme from protoporphyrin-IX: step 1/1.</text>
</comment>
<comment type="subunit">
    <text evidence="1">Monomer.</text>
</comment>
<comment type="subcellular location">
    <subcellularLocation>
        <location evidence="1">Cytoplasm</location>
    </subcellularLocation>
</comment>
<comment type="similarity">
    <text evidence="1 2">Belongs to the ferrochelatase family.</text>
</comment>
<reference key="1">
    <citation type="journal article" date="2001" name="Nature">
        <title>Complete genome sequence of Salmonella enterica serovar Typhimurium LT2.</title>
        <authorList>
            <person name="McClelland M."/>
            <person name="Sanderson K.E."/>
            <person name="Spieth J."/>
            <person name="Clifton S.W."/>
            <person name="Latreille P."/>
            <person name="Courtney L."/>
            <person name="Porwollik S."/>
            <person name="Ali J."/>
            <person name="Dante M."/>
            <person name="Du F."/>
            <person name="Hou S."/>
            <person name="Layman D."/>
            <person name="Leonard S."/>
            <person name="Nguyen C."/>
            <person name="Scott K."/>
            <person name="Holmes A."/>
            <person name="Grewal N."/>
            <person name="Mulvaney E."/>
            <person name="Ryan E."/>
            <person name="Sun H."/>
            <person name="Florea L."/>
            <person name="Miller W."/>
            <person name="Stoneking T."/>
            <person name="Nhan M."/>
            <person name="Waterston R."/>
            <person name="Wilson R.K."/>
        </authorList>
    </citation>
    <scope>NUCLEOTIDE SEQUENCE [LARGE SCALE GENOMIC DNA]</scope>
    <source>
        <strain>LT2 / SGSC1412 / ATCC 700720</strain>
    </source>
</reference>
<reference key="2">
    <citation type="journal article" date="1995" name="J. Bacteriol.">
        <title>Isolation and characterization of adenylate kinase (adk) mutations in Salmonella typhimurium which block the ability of glycine betaine to function as an osmoprotectant.</title>
        <authorList>
            <person name="Gutierrez J.A."/>
            <person name="Csonka L.N."/>
        </authorList>
    </citation>
    <scope>NUCLEOTIDE SEQUENCE [GENOMIC DNA] OF 1-168</scope>
    <source>
        <strain>LT2</strain>
    </source>
</reference>
<sequence>MRQTKTGILLANLGTPDAPTPEAVKRYLKQFLSDRRVVDTPRLLWWPLLRGVILPLRSPRVAKLYQSIWMDGGSPLMVYSREQQQALAARLPDTPVALGMSYGSPSLESAVDELLASDVDHIVVLPLYPQYSCSTVGAVWDELGRILARKRRIPGISFIRDYADDGAYIDALAKSARESFARHGEPDVLLLSYHGIPQRYADEGDDYPQRCRDTTRELVSALGLPPEKVMMTFQSRFGREPWLTPYTDETLKMLGEKGTGHIQVMCPGFAADCLETLEEIAEQNREIFLEAGGKKYAYIPALNATPEHIDMMLKLTAPYR</sequence>
<gene>
    <name evidence="1" type="primary">hemH</name>
    <name type="synonym">visA</name>
    <name type="ordered locus">STM0489</name>
</gene>
<evidence type="ECO:0000255" key="1">
    <source>
        <dbReference type="HAMAP-Rule" id="MF_00323"/>
    </source>
</evidence>
<evidence type="ECO:0000305" key="2"/>
<name>HEMH_SALTY</name>
<protein>
    <recommendedName>
        <fullName evidence="1">Ferrochelatase</fullName>
        <ecNumber evidence="1">4.98.1.1</ecNumber>
    </recommendedName>
    <alternativeName>
        <fullName evidence="1">Heme synthase</fullName>
    </alternativeName>
    <alternativeName>
        <fullName evidence="1">Protoheme ferro-lyase</fullName>
    </alternativeName>
</protein>
<organism>
    <name type="scientific">Salmonella typhimurium (strain LT2 / SGSC1412 / ATCC 700720)</name>
    <dbReference type="NCBI Taxonomy" id="99287"/>
    <lineage>
        <taxon>Bacteria</taxon>
        <taxon>Pseudomonadati</taxon>
        <taxon>Pseudomonadota</taxon>
        <taxon>Gammaproteobacteria</taxon>
        <taxon>Enterobacterales</taxon>
        <taxon>Enterobacteriaceae</taxon>
        <taxon>Salmonella</taxon>
    </lineage>
</organism>
<keyword id="KW-0963">Cytoplasm</keyword>
<keyword id="KW-0350">Heme biosynthesis</keyword>
<keyword id="KW-0408">Iron</keyword>
<keyword id="KW-0456">Lyase</keyword>
<keyword id="KW-0479">Metal-binding</keyword>
<keyword id="KW-0627">Porphyrin biosynthesis</keyword>
<keyword id="KW-1185">Reference proteome</keyword>
<feature type="chain" id="PRO_0000175197" description="Ferrochelatase">
    <location>
        <begin position="1"/>
        <end position="320"/>
    </location>
</feature>
<feature type="binding site" evidence="1">
    <location>
        <position position="194"/>
    </location>
    <ligand>
        <name>Fe cation</name>
        <dbReference type="ChEBI" id="CHEBI:24875"/>
    </ligand>
</feature>
<feature type="binding site" evidence="1">
    <location>
        <position position="275"/>
    </location>
    <ligand>
        <name>Fe cation</name>
        <dbReference type="ChEBI" id="CHEBI:24875"/>
    </ligand>
</feature>
<feature type="sequence conflict" description="In Ref. 2; AAA65970." evidence="2" ref="2">
    <original>P</original>
    <variation>S</variation>
    <location>
        <position position="41"/>
    </location>
</feature>
<feature type="sequence conflict" description="In Ref. 2; AAA65970." evidence="2" ref="2">
    <original>E</original>
    <variation>Q</variation>
    <location>
        <position position="82"/>
    </location>
</feature>
<feature type="sequence conflict" description="In Ref. 2; AAA65970." evidence="2" ref="2">
    <original>S</original>
    <variation>C</variation>
    <location>
        <position position="104"/>
    </location>
</feature>
<feature type="sequence conflict" description="In Ref. 2; AAA65970." evidence="2" ref="2">
    <original>R</original>
    <variation>P</variation>
    <location>
        <position position="149"/>
    </location>
</feature>
<feature type="sequence conflict" description="In Ref. 2; AAA65970." evidence="2" ref="2">
    <original>I</original>
    <variation>M</variation>
    <location>
        <position position="159"/>
    </location>
</feature>
<proteinExistence type="inferred from homology"/>